<evidence type="ECO:0000255" key="1">
    <source>
        <dbReference type="HAMAP-Rule" id="MF_00321"/>
    </source>
</evidence>
<keyword id="KW-0131">Cell cycle</keyword>
<keyword id="KW-0132">Cell division</keyword>
<keyword id="KW-0342">GTP-binding</keyword>
<keyword id="KW-0460">Magnesium</keyword>
<keyword id="KW-0479">Metal-binding</keyword>
<keyword id="KW-0547">Nucleotide-binding</keyword>
<keyword id="KW-1185">Reference proteome</keyword>
<keyword id="KW-0717">Septation</keyword>
<protein>
    <recommendedName>
        <fullName evidence="1">Probable GTP-binding protein EngB</fullName>
    </recommendedName>
</protein>
<comment type="function">
    <text evidence="1">Necessary for normal cell division and for the maintenance of normal septation.</text>
</comment>
<comment type="cofactor">
    <cofactor evidence="1">
        <name>Mg(2+)</name>
        <dbReference type="ChEBI" id="CHEBI:18420"/>
    </cofactor>
</comment>
<comment type="similarity">
    <text evidence="1">Belongs to the TRAFAC class TrmE-Era-EngA-EngB-Septin-like GTPase superfamily. EngB GTPase family.</text>
</comment>
<dbReference type="EMBL" id="CP001089">
    <property type="protein sequence ID" value="ACD94184.1"/>
    <property type="molecule type" value="Genomic_DNA"/>
</dbReference>
<dbReference type="RefSeq" id="WP_012468540.1">
    <property type="nucleotide sequence ID" value="NC_010814.1"/>
</dbReference>
<dbReference type="SMR" id="B3E2D1"/>
<dbReference type="STRING" id="398767.Glov_0456"/>
<dbReference type="KEGG" id="glo:Glov_0456"/>
<dbReference type="eggNOG" id="COG0218">
    <property type="taxonomic scope" value="Bacteria"/>
</dbReference>
<dbReference type="HOGENOM" id="CLU_033732_3_0_7"/>
<dbReference type="OrthoDB" id="9804921at2"/>
<dbReference type="Proteomes" id="UP000002420">
    <property type="component" value="Chromosome"/>
</dbReference>
<dbReference type="GO" id="GO:0005829">
    <property type="term" value="C:cytosol"/>
    <property type="evidence" value="ECO:0007669"/>
    <property type="project" value="TreeGrafter"/>
</dbReference>
<dbReference type="GO" id="GO:0005525">
    <property type="term" value="F:GTP binding"/>
    <property type="evidence" value="ECO:0007669"/>
    <property type="project" value="UniProtKB-UniRule"/>
</dbReference>
<dbReference type="GO" id="GO:0046872">
    <property type="term" value="F:metal ion binding"/>
    <property type="evidence" value="ECO:0007669"/>
    <property type="project" value="UniProtKB-KW"/>
</dbReference>
<dbReference type="GO" id="GO:0000917">
    <property type="term" value="P:division septum assembly"/>
    <property type="evidence" value="ECO:0007669"/>
    <property type="project" value="UniProtKB-KW"/>
</dbReference>
<dbReference type="CDD" id="cd01876">
    <property type="entry name" value="YihA_EngB"/>
    <property type="match status" value="1"/>
</dbReference>
<dbReference type="FunFam" id="3.40.50.300:FF:000098">
    <property type="entry name" value="Probable GTP-binding protein EngB"/>
    <property type="match status" value="1"/>
</dbReference>
<dbReference type="Gene3D" id="3.40.50.300">
    <property type="entry name" value="P-loop containing nucleotide triphosphate hydrolases"/>
    <property type="match status" value="1"/>
</dbReference>
<dbReference type="HAMAP" id="MF_00321">
    <property type="entry name" value="GTPase_EngB"/>
    <property type="match status" value="1"/>
</dbReference>
<dbReference type="InterPro" id="IPR030393">
    <property type="entry name" value="G_ENGB_dom"/>
</dbReference>
<dbReference type="InterPro" id="IPR006073">
    <property type="entry name" value="GTP-bd"/>
</dbReference>
<dbReference type="InterPro" id="IPR019987">
    <property type="entry name" value="GTP-bd_ribosome_bio_YsxC"/>
</dbReference>
<dbReference type="InterPro" id="IPR027417">
    <property type="entry name" value="P-loop_NTPase"/>
</dbReference>
<dbReference type="InterPro" id="IPR005225">
    <property type="entry name" value="Small_GTP-bd"/>
</dbReference>
<dbReference type="NCBIfam" id="TIGR03598">
    <property type="entry name" value="GTPase_YsxC"/>
    <property type="match status" value="1"/>
</dbReference>
<dbReference type="NCBIfam" id="TIGR00231">
    <property type="entry name" value="small_GTP"/>
    <property type="match status" value="1"/>
</dbReference>
<dbReference type="PANTHER" id="PTHR11649:SF13">
    <property type="entry name" value="ENGB-TYPE G DOMAIN-CONTAINING PROTEIN"/>
    <property type="match status" value="1"/>
</dbReference>
<dbReference type="PANTHER" id="PTHR11649">
    <property type="entry name" value="MSS1/TRME-RELATED GTP-BINDING PROTEIN"/>
    <property type="match status" value="1"/>
</dbReference>
<dbReference type="Pfam" id="PF01926">
    <property type="entry name" value="MMR_HSR1"/>
    <property type="match status" value="1"/>
</dbReference>
<dbReference type="SUPFAM" id="SSF52540">
    <property type="entry name" value="P-loop containing nucleoside triphosphate hydrolases"/>
    <property type="match status" value="1"/>
</dbReference>
<dbReference type="PROSITE" id="PS51706">
    <property type="entry name" value="G_ENGB"/>
    <property type="match status" value="1"/>
</dbReference>
<reference key="1">
    <citation type="submission" date="2008-05" db="EMBL/GenBank/DDBJ databases">
        <title>Complete sequence of chromosome of Geobacter lovleyi SZ.</title>
        <authorList>
            <consortium name="US DOE Joint Genome Institute"/>
            <person name="Lucas S."/>
            <person name="Copeland A."/>
            <person name="Lapidus A."/>
            <person name="Glavina del Rio T."/>
            <person name="Dalin E."/>
            <person name="Tice H."/>
            <person name="Bruce D."/>
            <person name="Goodwin L."/>
            <person name="Pitluck S."/>
            <person name="Chertkov O."/>
            <person name="Meincke L."/>
            <person name="Brettin T."/>
            <person name="Detter J.C."/>
            <person name="Han C."/>
            <person name="Tapia R."/>
            <person name="Kuske C.R."/>
            <person name="Schmutz J."/>
            <person name="Larimer F."/>
            <person name="Land M."/>
            <person name="Hauser L."/>
            <person name="Kyrpides N."/>
            <person name="Mikhailova N."/>
            <person name="Sung Y."/>
            <person name="Fletcher K.E."/>
            <person name="Ritalahti K.M."/>
            <person name="Loeffler F.E."/>
            <person name="Richardson P."/>
        </authorList>
    </citation>
    <scope>NUCLEOTIDE SEQUENCE [LARGE SCALE GENOMIC DNA]</scope>
    <source>
        <strain>ATCC BAA-1151 / DSM 17278 / SZ</strain>
    </source>
</reference>
<feature type="chain" id="PRO_1000115975" description="Probable GTP-binding protein EngB">
    <location>
        <begin position="1"/>
        <end position="200"/>
    </location>
</feature>
<feature type="domain" description="EngB-type G" evidence="1">
    <location>
        <begin position="22"/>
        <end position="197"/>
    </location>
</feature>
<feature type="binding site" evidence="1">
    <location>
        <begin position="30"/>
        <end position="37"/>
    </location>
    <ligand>
        <name>GTP</name>
        <dbReference type="ChEBI" id="CHEBI:37565"/>
    </ligand>
</feature>
<feature type="binding site" evidence="1">
    <location>
        <position position="37"/>
    </location>
    <ligand>
        <name>Mg(2+)</name>
        <dbReference type="ChEBI" id="CHEBI:18420"/>
    </ligand>
</feature>
<feature type="binding site" evidence="1">
    <location>
        <begin position="57"/>
        <end position="61"/>
    </location>
    <ligand>
        <name>GTP</name>
        <dbReference type="ChEBI" id="CHEBI:37565"/>
    </ligand>
</feature>
<feature type="binding site" evidence="1">
    <location>
        <position position="59"/>
    </location>
    <ligand>
        <name>Mg(2+)</name>
        <dbReference type="ChEBI" id="CHEBI:18420"/>
    </ligand>
</feature>
<feature type="binding site" evidence="1">
    <location>
        <begin position="78"/>
        <end position="81"/>
    </location>
    <ligand>
        <name>GTP</name>
        <dbReference type="ChEBI" id="CHEBI:37565"/>
    </ligand>
</feature>
<feature type="binding site" evidence="1">
    <location>
        <begin position="145"/>
        <end position="148"/>
    </location>
    <ligand>
        <name>GTP</name>
        <dbReference type="ChEBI" id="CHEBI:37565"/>
    </ligand>
</feature>
<feature type="binding site" evidence="1">
    <location>
        <begin position="176"/>
        <end position="178"/>
    </location>
    <ligand>
        <name>GTP</name>
        <dbReference type="ChEBI" id="CHEBI:37565"/>
    </ligand>
</feature>
<accession>B3E2D1</accession>
<proteinExistence type="inferred from homology"/>
<name>ENGB_TRIL1</name>
<gene>
    <name evidence="1" type="primary">engB</name>
    <name type="ordered locus">Glov_0456</name>
</gene>
<organism>
    <name type="scientific">Trichlorobacter lovleyi (strain ATCC BAA-1151 / DSM 17278 / SZ)</name>
    <name type="common">Geobacter lovleyi</name>
    <dbReference type="NCBI Taxonomy" id="398767"/>
    <lineage>
        <taxon>Bacteria</taxon>
        <taxon>Pseudomonadati</taxon>
        <taxon>Thermodesulfobacteriota</taxon>
        <taxon>Desulfuromonadia</taxon>
        <taxon>Geobacterales</taxon>
        <taxon>Geobacteraceae</taxon>
        <taxon>Trichlorobacter</taxon>
    </lineage>
</organism>
<sequence>MHIHQTTFIKSAVKPADYPPVDLPEIAFAGRSNVGKSSLINVIVERKALVRTSSTPGRTQLINFFQVTGVPFSLNLVDLPGYGYAKVPLDVKRQWGPMMERYLSGRESLRGVVLILDIRRIPSEEDLQMLNWLRSYKRRPIIVLTKCDKVTKNERARQTAAIAARLEMDKSQLIHFSALSKDGRDTVWQAIQDAVEEDAP</sequence>